<proteinExistence type="inferred from homology"/>
<protein>
    <recommendedName>
        <fullName evidence="2">D-alanine--D-alanine ligase</fullName>
        <ecNumber evidence="2">6.3.2.4</ecNumber>
    </recommendedName>
    <alternativeName>
        <fullName evidence="2">D-Ala-D-Ala ligase</fullName>
    </alternativeName>
    <alternativeName>
        <fullName evidence="2">D-alanylalanine synthetase</fullName>
    </alternativeName>
</protein>
<dbReference type="EC" id="6.3.2.4" evidence="2"/>
<dbReference type="EMBL" id="AM263198">
    <property type="protein sequence ID" value="CAK20266.1"/>
    <property type="molecule type" value="Genomic_DNA"/>
</dbReference>
<dbReference type="RefSeq" id="WP_011701684.1">
    <property type="nucleotide sequence ID" value="NC_008555.1"/>
</dbReference>
<dbReference type="SMR" id="A0AGY4"/>
<dbReference type="STRING" id="386043.lwe0848"/>
<dbReference type="GeneID" id="61188737"/>
<dbReference type="KEGG" id="lwe:lwe0848"/>
<dbReference type="eggNOG" id="COG1181">
    <property type="taxonomic scope" value="Bacteria"/>
</dbReference>
<dbReference type="HOGENOM" id="CLU_039268_0_0_9"/>
<dbReference type="OrthoDB" id="9813261at2"/>
<dbReference type="UniPathway" id="UPA00219"/>
<dbReference type="Proteomes" id="UP000000779">
    <property type="component" value="Chromosome"/>
</dbReference>
<dbReference type="GO" id="GO:0005829">
    <property type="term" value="C:cytosol"/>
    <property type="evidence" value="ECO:0007669"/>
    <property type="project" value="TreeGrafter"/>
</dbReference>
<dbReference type="GO" id="GO:0005524">
    <property type="term" value="F:ATP binding"/>
    <property type="evidence" value="ECO:0007669"/>
    <property type="project" value="UniProtKB-KW"/>
</dbReference>
<dbReference type="GO" id="GO:0008716">
    <property type="term" value="F:D-alanine-D-alanine ligase activity"/>
    <property type="evidence" value="ECO:0007669"/>
    <property type="project" value="UniProtKB-UniRule"/>
</dbReference>
<dbReference type="GO" id="GO:0046872">
    <property type="term" value="F:metal ion binding"/>
    <property type="evidence" value="ECO:0007669"/>
    <property type="project" value="UniProtKB-KW"/>
</dbReference>
<dbReference type="GO" id="GO:0071555">
    <property type="term" value="P:cell wall organization"/>
    <property type="evidence" value="ECO:0007669"/>
    <property type="project" value="UniProtKB-KW"/>
</dbReference>
<dbReference type="GO" id="GO:0009252">
    <property type="term" value="P:peptidoglycan biosynthetic process"/>
    <property type="evidence" value="ECO:0007669"/>
    <property type="project" value="UniProtKB-UniRule"/>
</dbReference>
<dbReference type="GO" id="GO:0008360">
    <property type="term" value="P:regulation of cell shape"/>
    <property type="evidence" value="ECO:0007669"/>
    <property type="project" value="UniProtKB-KW"/>
</dbReference>
<dbReference type="FunFam" id="3.30.1490.20:FF:000007">
    <property type="entry name" value="D-alanine--D-alanine ligase"/>
    <property type="match status" value="1"/>
</dbReference>
<dbReference type="FunFam" id="3.30.470.20:FF:000008">
    <property type="entry name" value="D-alanine--D-alanine ligase"/>
    <property type="match status" value="1"/>
</dbReference>
<dbReference type="Gene3D" id="3.40.50.20">
    <property type="match status" value="1"/>
</dbReference>
<dbReference type="Gene3D" id="3.30.1490.20">
    <property type="entry name" value="ATP-grasp fold, A domain"/>
    <property type="match status" value="1"/>
</dbReference>
<dbReference type="Gene3D" id="3.30.470.20">
    <property type="entry name" value="ATP-grasp fold, B domain"/>
    <property type="match status" value="1"/>
</dbReference>
<dbReference type="HAMAP" id="MF_00047">
    <property type="entry name" value="Dala_Dala_lig"/>
    <property type="match status" value="1"/>
</dbReference>
<dbReference type="InterPro" id="IPR011761">
    <property type="entry name" value="ATP-grasp"/>
</dbReference>
<dbReference type="InterPro" id="IPR013815">
    <property type="entry name" value="ATP_grasp_subdomain_1"/>
</dbReference>
<dbReference type="InterPro" id="IPR000291">
    <property type="entry name" value="D-Ala_lig_Van_CS"/>
</dbReference>
<dbReference type="InterPro" id="IPR005905">
    <property type="entry name" value="D_ala_D_ala"/>
</dbReference>
<dbReference type="InterPro" id="IPR011095">
    <property type="entry name" value="Dala_Dala_lig_C"/>
</dbReference>
<dbReference type="InterPro" id="IPR011127">
    <property type="entry name" value="Dala_Dala_lig_N"/>
</dbReference>
<dbReference type="InterPro" id="IPR016185">
    <property type="entry name" value="PreATP-grasp_dom_sf"/>
</dbReference>
<dbReference type="NCBIfam" id="TIGR01205">
    <property type="entry name" value="D_ala_D_alaTIGR"/>
    <property type="match status" value="1"/>
</dbReference>
<dbReference type="NCBIfam" id="NF002526">
    <property type="entry name" value="PRK01966.1-2"/>
    <property type="match status" value="1"/>
</dbReference>
<dbReference type="NCBIfam" id="NF002528">
    <property type="entry name" value="PRK01966.1-4"/>
    <property type="match status" value="1"/>
</dbReference>
<dbReference type="PANTHER" id="PTHR23132">
    <property type="entry name" value="D-ALANINE--D-ALANINE LIGASE"/>
    <property type="match status" value="1"/>
</dbReference>
<dbReference type="PANTHER" id="PTHR23132:SF25">
    <property type="entry name" value="D-ALANINE--D-ALANINE LIGASE A"/>
    <property type="match status" value="1"/>
</dbReference>
<dbReference type="Pfam" id="PF07478">
    <property type="entry name" value="Dala_Dala_lig_C"/>
    <property type="match status" value="1"/>
</dbReference>
<dbReference type="Pfam" id="PF01820">
    <property type="entry name" value="Dala_Dala_lig_N"/>
    <property type="match status" value="1"/>
</dbReference>
<dbReference type="PIRSF" id="PIRSF039102">
    <property type="entry name" value="Ddl/VanB"/>
    <property type="match status" value="1"/>
</dbReference>
<dbReference type="SUPFAM" id="SSF56059">
    <property type="entry name" value="Glutathione synthetase ATP-binding domain-like"/>
    <property type="match status" value="1"/>
</dbReference>
<dbReference type="SUPFAM" id="SSF52440">
    <property type="entry name" value="PreATP-grasp domain"/>
    <property type="match status" value="1"/>
</dbReference>
<dbReference type="PROSITE" id="PS50975">
    <property type="entry name" value="ATP_GRASP"/>
    <property type="match status" value="1"/>
</dbReference>
<dbReference type="PROSITE" id="PS00843">
    <property type="entry name" value="DALA_DALA_LIGASE_1"/>
    <property type="match status" value="1"/>
</dbReference>
<dbReference type="PROSITE" id="PS00844">
    <property type="entry name" value="DALA_DALA_LIGASE_2"/>
    <property type="match status" value="1"/>
</dbReference>
<reference key="1">
    <citation type="journal article" date="2006" name="J. Bacteriol.">
        <title>Whole-genome sequence of Listeria welshimeri reveals common steps in genome reduction with Listeria innocua as compared to Listeria monocytogenes.</title>
        <authorList>
            <person name="Hain T."/>
            <person name="Steinweg C."/>
            <person name="Kuenne C.T."/>
            <person name="Billion A."/>
            <person name="Ghai R."/>
            <person name="Chatterjee S.S."/>
            <person name="Domann E."/>
            <person name="Kaerst U."/>
            <person name="Goesmann A."/>
            <person name="Bekel T."/>
            <person name="Bartels D."/>
            <person name="Kaiser O."/>
            <person name="Meyer F."/>
            <person name="Puehler A."/>
            <person name="Weisshaar B."/>
            <person name="Wehland J."/>
            <person name="Liang C."/>
            <person name="Dandekar T."/>
            <person name="Lampidis R."/>
            <person name="Kreft J."/>
            <person name="Goebel W."/>
            <person name="Chakraborty T."/>
        </authorList>
    </citation>
    <scope>NUCLEOTIDE SEQUENCE [LARGE SCALE GENOMIC DNA]</scope>
    <source>
        <strain>ATCC 35897 / DSM 20650 / CCUG 15529 / CIP 8149 / NCTC 11857 / SLCC 5334 / V8</strain>
    </source>
</reference>
<gene>
    <name evidence="2" type="primary">ddl</name>
    <name type="ordered locus">lwe0848</name>
</gene>
<organism>
    <name type="scientific">Listeria welshimeri serovar 6b (strain ATCC 35897 / DSM 20650 / CCUG 15529 / CIP 8149 / NCTC 11857 / SLCC 5334 / V8)</name>
    <dbReference type="NCBI Taxonomy" id="386043"/>
    <lineage>
        <taxon>Bacteria</taxon>
        <taxon>Bacillati</taxon>
        <taxon>Bacillota</taxon>
        <taxon>Bacilli</taxon>
        <taxon>Bacillales</taxon>
        <taxon>Listeriaceae</taxon>
        <taxon>Listeria</taxon>
    </lineage>
</organism>
<sequence length="370" mass="40788">MKTKLILLYGGKSAEHEVSLQTAFSVINALDLEKFEAEPIYITNEGEWVQGPLLTGKLDFVEQLRFSATNTVKLAATESEKSEGEAISPAVLEADDQETVVFPLLHGPNGEDGTVQGLFEVLNIPYVGNGVLASSAAMDKIVMKKIFADAGIPQVPAVAVRLIDWKNYQEEMVSEMEEVLTYPVFVKPANLGSSVGISKATNKKELEDAMTEAFLYDRRVVVEQGVVAREIEMGVLGNDTPVCSVPGEILPEGAVATFYDYKAKYQDNNTALIIPTEVDPEILEQMKEYAVQAFLGLDASGLVRADFFLTDDNQLFLNEVNTMPGFTPYSMYPLLWQETGLPYSALIERLVDLAKERHAAKNALKYKLED</sequence>
<keyword id="KW-0067">ATP-binding</keyword>
<keyword id="KW-0133">Cell shape</keyword>
<keyword id="KW-0961">Cell wall biogenesis/degradation</keyword>
<keyword id="KW-0963">Cytoplasm</keyword>
<keyword id="KW-0436">Ligase</keyword>
<keyword id="KW-0460">Magnesium</keyword>
<keyword id="KW-0464">Manganese</keyword>
<keyword id="KW-0479">Metal-binding</keyword>
<keyword id="KW-0547">Nucleotide-binding</keyword>
<keyword id="KW-0573">Peptidoglycan synthesis</keyword>
<evidence type="ECO:0000250" key="1"/>
<evidence type="ECO:0000255" key="2">
    <source>
        <dbReference type="HAMAP-Rule" id="MF_00047"/>
    </source>
</evidence>
<comment type="function">
    <text evidence="2">Cell wall formation.</text>
</comment>
<comment type="catalytic activity">
    <reaction evidence="2">
        <text>2 D-alanine + ATP = D-alanyl-D-alanine + ADP + phosphate + H(+)</text>
        <dbReference type="Rhea" id="RHEA:11224"/>
        <dbReference type="ChEBI" id="CHEBI:15378"/>
        <dbReference type="ChEBI" id="CHEBI:30616"/>
        <dbReference type="ChEBI" id="CHEBI:43474"/>
        <dbReference type="ChEBI" id="CHEBI:57416"/>
        <dbReference type="ChEBI" id="CHEBI:57822"/>
        <dbReference type="ChEBI" id="CHEBI:456216"/>
        <dbReference type="EC" id="6.3.2.4"/>
    </reaction>
</comment>
<comment type="cofactor">
    <cofactor evidence="1">
        <name>Mg(2+)</name>
        <dbReference type="ChEBI" id="CHEBI:18420"/>
    </cofactor>
    <cofactor evidence="1">
        <name>Mn(2+)</name>
        <dbReference type="ChEBI" id="CHEBI:29035"/>
    </cofactor>
    <text evidence="1">Binds 2 magnesium or manganese ions per subunit.</text>
</comment>
<comment type="pathway">
    <text evidence="2">Cell wall biogenesis; peptidoglycan biosynthesis.</text>
</comment>
<comment type="subcellular location">
    <subcellularLocation>
        <location evidence="2">Cytoplasm</location>
    </subcellularLocation>
</comment>
<comment type="similarity">
    <text evidence="2">Belongs to the D-alanine--D-alanine ligase family.</text>
</comment>
<accession>A0AGY4</accession>
<feature type="chain" id="PRO_1000030464" description="D-alanine--D-alanine ligase">
    <location>
        <begin position="1"/>
        <end position="370"/>
    </location>
</feature>
<feature type="domain" description="ATP-grasp" evidence="2">
    <location>
        <begin position="144"/>
        <end position="352"/>
    </location>
</feature>
<feature type="binding site" evidence="2">
    <location>
        <begin position="177"/>
        <end position="232"/>
    </location>
    <ligand>
        <name>ATP</name>
        <dbReference type="ChEBI" id="CHEBI:30616"/>
    </ligand>
</feature>
<feature type="binding site" evidence="2">
    <location>
        <position position="306"/>
    </location>
    <ligand>
        <name>Mg(2+)</name>
        <dbReference type="ChEBI" id="CHEBI:18420"/>
        <label>1</label>
    </ligand>
</feature>
<feature type="binding site" evidence="2">
    <location>
        <position position="319"/>
    </location>
    <ligand>
        <name>Mg(2+)</name>
        <dbReference type="ChEBI" id="CHEBI:18420"/>
        <label>1</label>
    </ligand>
</feature>
<feature type="binding site" evidence="2">
    <location>
        <position position="319"/>
    </location>
    <ligand>
        <name>Mg(2+)</name>
        <dbReference type="ChEBI" id="CHEBI:18420"/>
        <label>2</label>
    </ligand>
</feature>
<feature type="binding site" evidence="2">
    <location>
        <position position="321"/>
    </location>
    <ligand>
        <name>Mg(2+)</name>
        <dbReference type="ChEBI" id="CHEBI:18420"/>
        <label>2</label>
    </ligand>
</feature>
<name>DDL_LISW6</name>